<protein>
    <recommendedName>
        <fullName evidence="1">Hydroxylamine reductase</fullName>
        <ecNumber evidence="1">1.7.99.1</ecNumber>
    </recommendedName>
    <alternativeName>
        <fullName evidence="1">Hybrid-cluster protein</fullName>
        <shortName evidence="1">HCP</shortName>
    </alternativeName>
    <alternativeName>
        <fullName evidence="1">Prismane protein</fullName>
    </alternativeName>
</protein>
<keyword id="KW-0004">4Fe-4S</keyword>
<keyword id="KW-0963">Cytoplasm</keyword>
<keyword id="KW-0408">Iron</keyword>
<keyword id="KW-0411">Iron-sulfur</keyword>
<keyword id="KW-0479">Metal-binding</keyword>
<keyword id="KW-0560">Oxidoreductase</keyword>
<sequence length="570" mass="62775">MSMFCYQCQEAAGGRGCTVKGVCGKTEDIAKTQDLIIYVVKGIAIYSSQAREIGLNTSEADKFIVESLFSTITNANFDAKALNARVQEGLKVRQSLKDAIIKAGGSYNSKENKSWTSKFLSVLGIKNDKDEKEIHDAAVWAANNPEDFKKKAETVGVLATENEDIRSLRELLTYGLKGMAAYLEHANNLGYDEDSIHAFMEKALVATLDDTLSADELTALVLECGKYGVDVMALLDKANTSTYGNPEITKVNIGVRNNPGILISGHDLKDMEELLKQTEGTGVDVYTHSEMLPANYYPAFKKYKHFVGNYGNAWWKQNEEFEAFNGPILMTTNCIVTPKASYKDRMYTTGVTGFEGVKHINASKDGKKDFSEIIEHAKRCSSPKEIEKGEIIGGFAHNQVLALAPQVVDAVKTGAIKRFFVMAGCDGRMKSRNYYTDFAKALPKDTVILTAGCAKYKYNKLDLGDINGIPRVLDAGQCNDSYSLAVIALKLKEVFELEDINELPISYNIAWYEQKAVIVLLALLHLGVKNIHLGPTLPAFLSPNVAKILVENFGIGTISSVDEDIKMFMN</sequence>
<accession>A7GH10</accession>
<feature type="chain" id="PRO_1000009149" description="Hydroxylamine reductase">
    <location>
        <begin position="1"/>
        <end position="570"/>
    </location>
</feature>
<feature type="binding site" evidence="1">
    <location>
        <position position="5"/>
    </location>
    <ligand>
        <name>[4Fe-4S] cluster</name>
        <dbReference type="ChEBI" id="CHEBI:49883"/>
    </ligand>
</feature>
<feature type="binding site" evidence="1">
    <location>
        <position position="8"/>
    </location>
    <ligand>
        <name>[4Fe-4S] cluster</name>
        <dbReference type="ChEBI" id="CHEBI:49883"/>
    </ligand>
</feature>
<feature type="binding site" evidence="1">
    <location>
        <position position="17"/>
    </location>
    <ligand>
        <name>[4Fe-4S] cluster</name>
        <dbReference type="ChEBI" id="CHEBI:49883"/>
    </ligand>
</feature>
<feature type="binding site" evidence="1">
    <location>
        <position position="23"/>
    </location>
    <ligand>
        <name>[4Fe-4S] cluster</name>
        <dbReference type="ChEBI" id="CHEBI:49883"/>
    </ligand>
</feature>
<feature type="binding site" evidence="1">
    <location>
        <position position="266"/>
    </location>
    <ligand>
        <name>hybrid [4Fe-2O-2S] cluster</name>
        <dbReference type="ChEBI" id="CHEBI:60519"/>
    </ligand>
</feature>
<feature type="binding site" evidence="1">
    <location>
        <position position="290"/>
    </location>
    <ligand>
        <name>hybrid [4Fe-2O-2S] cluster</name>
        <dbReference type="ChEBI" id="CHEBI:60519"/>
    </ligand>
</feature>
<feature type="binding site" evidence="1">
    <location>
        <position position="334"/>
    </location>
    <ligand>
        <name>hybrid [4Fe-2O-2S] cluster</name>
        <dbReference type="ChEBI" id="CHEBI:60519"/>
    </ligand>
</feature>
<feature type="binding site" description="via persulfide group" evidence="1">
    <location>
        <position position="425"/>
    </location>
    <ligand>
        <name>hybrid [4Fe-2O-2S] cluster</name>
        <dbReference type="ChEBI" id="CHEBI:60519"/>
    </ligand>
</feature>
<feature type="binding site" evidence="1">
    <location>
        <position position="453"/>
    </location>
    <ligand>
        <name>hybrid [4Fe-2O-2S] cluster</name>
        <dbReference type="ChEBI" id="CHEBI:60519"/>
    </ligand>
</feature>
<feature type="binding site" evidence="1">
    <location>
        <position position="478"/>
    </location>
    <ligand>
        <name>hybrid [4Fe-2O-2S] cluster</name>
        <dbReference type="ChEBI" id="CHEBI:60519"/>
    </ligand>
</feature>
<feature type="binding site" evidence="1">
    <location>
        <position position="513"/>
    </location>
    <ligand>
        <name>hybrid [4Fe-2O-2S] cluster</name>
        <dbReference type="ChEBI" id="CHEBI:60519"/>
    </ligand>
</feature>
<feature type="binding site" evidence="1">
    <location>
        <position position="515"/>
    </location>
    <ligand>
        <name>hybrid [4Fe-2O-2S] cluster</name>
        <dbReference type="ChEBI" id="CHEBI:60519"/>
    </ligand>
</feature>
<feature type="modified residue" description="Cysteine persulfide" evidence="1">
    <location>
        <position position="425"/>
    </location>
</feature>
<gene>
    <name evidence="1" type="primary">hcp</name>
    <name type="ordered locus">CLI_2842</name>
</gene>
<reference key="1">
    <citation type="submission" date="2007-06" db="EMBL/GenBank/DDBJ databases">
        <authorList>
            <person name="Brinkac L.M."/>
            <person name="Daugherty S."/>
            <person name="Dodson R.J."/>
            <person name="Madupu R."/>
            <person name="Brown J.L."/>
            <person name="Bruce D."/>
            <person name="Detter C."/>
            <person name="Munk C."/>
            <person name="Smith L.A."/>
            <person name="Smith T.J."/>
            <person name="White O."/>
            <person name="Brettin T.S."/>
        </authorList>
    </citation>
    <scope>NUCLEOTIDE SEQUENCE [LARGE SCALE GENOMIC DNA]</scope>
    <source>
        <strain>Langeland / NCTC 10281 / Type F</strain>
    </source>
</reference>
<proteinExistence type="inferred from homology"/>
<name>HCP_CLOBL</name>
<dbReference type="EC" id="1.7.99.1" evidence="1"/>
<dbReference type="EMBL" id="CP000728">
    <property type="protein sequence ID" value="ABS42663.1"/>
    <property type="molecule type" value="Genomic_DNA"/>
</dbReference>
<dbReference type="RefSeq" id="WP_012100596.1">
    <property type="nucleotide sequence ID" value="NC_009699.1"/>
</dbReference>
<dbReference type="SMR" id="A7GH10"/>
<dbReference type="KEGG" id="cbf:CLI_2842"/>
<dbReference type="HOGENOM" id="CLU_038344_2_0_9"/>
<dbReference type="Proteomes" id="UP000002410">
    <property type="component" value="Chromosome"/>
</dbReference>
<dbReference type="GO" id="GO:0005737">
    <property type="term" value="C:cytoplasm"/>
    <property type="evidence" value="ECO:0007669"/>
    <property type="project" value="UniProtKB-SubCell"/>
</dbReference>
<dbReference type="GO" id="GO:0051539">
    <property type="term" value="F:4 iron, 4 sulfur cluster binding"/>
    <property type="evidence" value="ECO:0007669"/>
    <property type="project" value="UniProtKB-KW"/>
</dbReference>
<dbReference type="GO" id="GO:0050418">
    <property type="term" value="F:hydroxylamine reductase activity"/>
    <property type="evidence" value="ECO:0007669"/>
    <property type="project" value="UniProtKB-UniRule"/>
</dbReference>
<dbReference type="GO" id="GO:0046872">
    <property type="term" value="F:metal ion binding"/>
    <property type="evidence" value="ECO:0007669"/>
    <property type="project" value="UniProtKB-KW"/>
</dbReference>
<dbReference type="GO" id="GO:0004601">
    <property type="term" value="F:peroxidase activity"/>
    <property type="evidence" value="ECO:0007669"/>
    <property type="project" value="TreeGrafter"/>
</dbReference>
<dbReference type="GO" id="GO:0042542">
    <property type="term" value="P:response to hydrogen peroxide"/>
    <property type="evidence" value="ECO:0007669"/>
    <property type="project" value="TreeGrafter"/>
</dbReference>
<dbReference type="CDD" id="cd01914">
    <property type="entry name" value="HCP"/>
    <property type="match status" value="1"/>
</dbReference>
<dbReference type="FunFam" id="1.20.1270.20:FF:000001">
    <property type="entry name" value="Hydroxylamine reductase"/>
    <property type="match status" value="1"/>
</dbReference>
<dbReference type="FunFam" id="1.20.1270.20:FF:000003">
    <property type="entry name" value="Hydroxylamine reductase"/>
    <property type="match status" value="1"/>
</dbReference>
<dbReference type="FunFam" id="3.40.50.2030:FF:000001">
    <property type="entry name" value="Hydroxylamine reductase"/>
    <property type="match status" value="1"/>
</dbReference>
<dbReference type="FunFam" id="3.40.50.2030:FF:000002">
    <property type="entry name" value="Hydroxylamine reductase"/>
    <property type="match status" value="1"/>
</dbReference>
<dbReference type="Gene3D" id="1.20.1270.20">
    <property type="match status" value="2"/>
</dbReference>
<dbReference type="Gene3D" id="3.40.50.2030">
    <property type="match status" value="2"/>
</dbReference>
<dbReference type="HAMAP" id="MF_00069">
    <property type="entry name" value="Hydroxylam_reduct"/>
    <property type="match status" value="1"/>
</dbReference>
<dbReference type="InterPro" id="IPR004137">
    <property type="entry name" value="HCP/CODH"/>
</dbReference>
<dbReference type="InterPro" id="IPR010048">
    <property type="entry name" value="Hydroxylam_reduct"/>
</dbReference>
<dbReference type="InterPro" id="IPR016099">
    <property type="entry name" value="Prismane-like_a/b-sand"/>
</dbReference>
<dbReference type="InterPro" id="IPR011254">
    <property type="entry name" value="Prismane-like_sf"/>
</dbReference>
<dbReference type="InterPro" id="IPR016100">
    <property type="entry name" value="Prismane_a-bundle"/>
</dbReference>
<dbReference type="NCBIfam" id="TIGR01703">
    <property type="entry name" value="hybrid_clust"/>
    <property type="match status" value="1"/>
</dbReference>
<dbReference type="NCBIfam" id="NF003658">
    <property type="entry name" value="PRK05290.1"/>
    <property type="match status" value="1"/>
</dbReference>
<dbReference type="PANTHER" id="PTHR30109">
    <property type="entry name" value="HYDROXYLAMINE REDUCTASE"/>
    <property type="match status" value="1"/>
</dbReference>
<dbReference type="PANTHER" id="PTHR30109:SF0">
    <property type="entry name" value="HYDROXYLAMINE REDUCTASE"/>
    <property type="match status" value="1"/>
</dbReference>
<dbReference type="Pfam" id="PF03063">
    <property type="entry name" value="Prismane"/>
    <property type="match status" value="1"/>
</dbReference>
<dbReference type="PIRSF" id="PIRSF000076">
    <property type="entry name" value="HCP"/>
    <property type="match status" value="1"/>
</dbReference>
<dbReference type="SUPFAM" id="SSF56821">
    <property type="entry name" value="Prismane protein-like"/>
    <property type="match status" value="1"/>
</dbReference>
<evidence type="ECO:0000255" key="1">
    <source>
        <dbReference type="HAMAP-Rule" id="MF_00069"/>
    </source>
</evidence>
<organism>
    <name type="scientific">Clostridium botulinum (strain Langeland / NCTC 10281 / Type F)</name>
    <dbReference type="NCBI Taxonomy" id="441772"/>
    <lineage>
        <taxon>Bacteria</taxon>
        <taxon>Bacillati</taxon>
        <taxon>Bacillota</taxon>
        <taxon>Clostridia</taxon>
        <taxon>Eubacteriales</taxon>
        <taxon>Clostridiaceae</taxon>
        <taxon>Clostridium</taxon>
    </lineage>
</organism>
<comment type="function">
    <text evidence="1">Catalyzes the reduction of hydroxylamine to form NH(3) and H(2)O.</text>
</comment>
<comment type="catalytic activity">
    <reaction evidence="1">
        <text>A + NH4(+) + H2O = hydroxylamine + AH2 + H(+)</text>
        <dbReference type="Rhea" id="RHEA:22052"/>
        <dbReference type="ChEBI" id="CHEBI:13193"/>
        <dbReference type="ChEBI" id="CHEBI:15377"/>
        <dbReference type="ChEBI" id="CHEBI:15378"/>
        <dbReference type="ChEBI" id="CHEBI:15429"/>
        <dbReference type="ChEBI" id="CHEBI:17499"/>
        <dbReference type="ChEBI" id="CHEBI:28938"/>
        <dbReference type="EC" id="1.7.99.1"/>
    </reaction>
</comment>
<comment type="cofactor">
    <cofactor evidence="1">
        <name>[4Fe-4S] cluster</name>
        <dbReference type="ChEBI" id="CHEBI:49883"/>
    </cofactor>
    <text evidence="1">Binds 1 [4Fe-4S] cluster.</text>
</comment>
<comment type="cofactor">
    <cofactor evidence="1">
        <name>hybrid [4Fe-2O-2S] cluster</name>
        <dbReference type="ChEBI" id="CHEBI:60519"/>
    </cofactor>
    <text evidence="1">Binds 1 hybrid [4Fe-2O-2S] cluster.</text>
</comment>
<comment type="subcellular location">
    <subcellularLocation>
        <location evidence="1">Cytoplasm</location>
    </subcellularLocation>
</comment>
<comment type="similarity">
    <text evidence="1">Belongs to the HCP family.</text>
</comment>